<proteinExistence type="inferred from homology"/>
<reference key="1">
    <citation type="journal article" date="2009" name="PLoS Genet.">
        <title>Organised genome dynamics in the Escherichia coli species results in highly diverse adaptive paths.</title>
        <authorList>
            <person name="Touchon M."/>
            <person name="Hoede C."/>
            <person name="Tenaillon O."/>
            <person name="Barbe V."/>
            <person name="Baeriswyl S."/>
            <person name="Bidet P."/>
            <person name="Bingen E."/>
            <person name="Bonacorsi S."/>
            <person name="Bouchier C."/>
            <person name="Bouvet O."/>
            <person name="Calteau A."/>
            <person name="Chiapello H."/>
            <person name="Clermont O."/>
            <person name="Cruveiller S."/>
            <person name="Danchin A."/>
            <person name="Diard M."/>
            <person name="Dossat C."/>
            <person name="Karoui M.E."/>
            <person name="Frapy E."/>
            <person name="Garry L."/>
            <person name="Ghigo J.M."/>
            <person name="Gilles A.M."/>
            <person name="Johnson J."/>
            <person name="Le Bouguenec C."/>
            <person name="Lescat M."/>
            <person name="Mangenot S."/>
            <person name="Martinez-Jehanne V."/>
            <person name="Matic I."/>
            <person name="Nassif X."/>
            <person name="Oztas S."/>
            <person name="Petit M.A."/>
            <person name="Pichon C."/>
            <person name="Rouy Z."/>
            <person name="Ruf C.S."/>
            <person name="Schneider D."/>
            <person name="Tourret J."/>
            <person name="Vacherie B."/>
            <person name="Vallenet D."/>
            <person name="Medigue C."/>
            <person name="Rocha E.P.C."/>
            <person name="Denamur E."/>
        </authorList>
    </citation>
    <scope>NUCLEOTIDE SEQUENCE [LARGE SCALE GENOMIC DNA]</scope>
    <source>
        <strain>55989 / EAEC</strain>
    </source>
</reference>
<dbReference type="EC" id="2.7.1.6" evidence="1"/>
<dbReference type="EMBL" id="CU928145">
    <property type="protein sequence ID" value="CAU96604.1"/>
    <property type="molecule type" value="Genomic_DNA"/>
</dbReference>
<dbReference type="RefSeq" id="WP_000053415.1">
    <property type="nucleotide sequence ID" value="NZ_CP028304.1"/>
</dbReference>
<dbReference type="SMR" id="B7LAF8"/>
<dbReference type="GeneID" id="75170756"/>
<dbReference type="KEGG" id="eck:EC55989_0736"/>
<dbReference type="HOGENOM" id="CLU_017814_2_1_6"/>
<dbReference type="UniPathway" id="UPA00214"/>
<dbReference type="Proteomes" id="UP000000746">
    <property type="component" value="Chromosome"/>
</dbReference>
<dbReference type="GO" id="GO:0005829">
    <property type="term" value="C:cytosol"/>
    <property type="evidence" value="ECO:0007669"/>
    <property type="project" value="TreeGrafter"/>
</dbReference>
<dbReference type="GO" id="GO:0005524">
    <property type="term" value="F:ATP binding"/>
    <property type="evidence" value="ECO:0007669"/>
    <property type="project" value="UniProtKB-UniRule"/>
</dbReference>
<dbReference type="GO" id="GO:0004335">
    <property type="term" value="F:galactokinase activity"/>
    <property type="evidence" value="ECO:0007669"/>
    <property type="project" value="UniProtKB-UniRule"/>
</dbReference>
<dbReference type="GO" id="GO:0000287">
    <property type="term" value="F:magnesium ion binding"/>
    <property type="evidence" value="ECO:0007669"/>
    <property type="project" value="UniProtKB-UniRule"/>
</dbReference>
<dbReference type="GO" id="GO:0006012">
    <property type="term" value="P:galactose metabolic process"/>
    <property type="evidence" value="ECO:0007669"/>
    <property type="project" value="UniProtKB-UniRule"/>
</dbReference>
<dbReference type="FunFam" id="3.30.230.10:FF:000017">
    <property type="entry name" value="Galactokinase"/>
    <property type="match status" value="1"/>
</dbReference>
<dbReference type="FunFam" id="3.30.70.890:FF:000001">
    <property type="entry name" value="Galactokinase"/>
    <property type="match status" value="1"/>
</dbReference>
<dbReference type="Gene3D" id="3.30.230.10">
    <property type="match status" value="1"/>
</dbReference>
<dbReference type="Gene3D" id="3.30.70.890">
    <property type="entry name" value="GHMP kinase, C-terminal domain"/>
    <property type="match status" value="1"/>
</dbReference>
<dbReference type="HAMAP" id="MF_00246">
    <property type="entry name" value="Galactokinase"/>
    <property type="match status" value="1"/>
</dbReference>
<dbReference type="InterPro" id="IPR000705">
    <property type="entry name" value="Galactokinase"/>
</dbReference>
<dbReference type="InterPro" id="IPR022963">
    <property type="entry name" value="Galactokinase_bac"/>
</dbReference>
<dbReference type="InterPro" id="IPR019741">
    <property type="entry name" value="Galactokinase_CS"/>
</dbReference>
<dbReference type="InterPro" id="IPR019539">
    <property type="entry name" value="GalKase_N"/>
</dbReference>
<dbReference type="InterPro" id="IPR013750">
    <property type="entry name" value="GHMP_kinase_C_dom"/>
</dbReference>
<dbReference type="InterPro" id="IPR036554">
    <property type="entry name" value="GHMP_kinase_C_sf"/>
</dbReference>
<dbReference type="InterPro" id="IPR006204">
    <property type="entry name" value="GHMP_kinase_N_dom"/>
</dbReference>
<dbReference type="InterPro" id="IPR006203">
    <property type="entry name" value="GHMP_knse_ATP-bd_CS"/>
</dbReference>
<dbReference type="InterPro" id="IPR006206">
    <property type="entry name" value="Mevalonate/galactokinase"/>
</dbReference>
<dbReference type="InterPro" id="IPR020568">
    <property type="entry name" value="Ribosomal_Su5_D2-typ_SF"/>
</dbReference>
<dbReference type="InterPro" id="IPR014721">
    <property type="entry name" value="Ribsml_uS5_D2-typ_fold_subgr"/>
</dbReference>
<dbReference type="NCBIfam" id="TIGR00131">
    <property type="entry name" value="gal_kin"/>
    <property type="match status" value="1"/>
</dbReference>
<dbReference type="NCBIfam" id="NF003472">
    <property type="entry name" value="PRK05101.1"/>
    <property type="match status" value="1"/>
</dbReference>
<dbReference type="PANTHER" id="PTHR10457:SF7">
    <property type="entry name" value="GALACTOKINASE-RELATED"/>
    <property type="match status" value="1"/>
</dbReference>
<dbReference type="PANTHER" id="PTHR10457">
    <property type="entry name" value="MEVALONATE KINASE/GALACTOKINASE"/>
    <property type="match status" value="1"/>
</dbReference>
<dbReference type="Pfam" id="PF10509">
    <property type="entry name" value="GalKase_gal_bdg"/>
    <property type="match status" value="1"/>
</dbReference>
<dbReference type="Pfam" id="PF08544">
    <property type="entry name" value="GHMP_kinases_C"/>
    <property type="match status" value="1"/>
</dbReference>
<dbReference type="Pfam" id="PF00288">
    <property type="entry name" value="GHMP_kinases_N"/>
    <property type="match status" value="1"/>
</dbReference>
<dbReference type="PIRSF" id="PIRSF000530">
    <property type="entry name" value="Galactokinase"/>
    <property type="match status" value="1"/>
</dbReference>
<dbReference type="PRINTS" id="PR00473">
    <property type="entry name" value="GALCTOKINASE"/>
</dbReference>
<dbReference type="PRINTS" id="PR00959">
    <property type="entry name" value="MEVGALKINASE"/>
</dbReference>
<dbReference type="SUPFAM" id="SSF55060">
    <property type="entry name" value="GHMP Kinase, C-terminal domain"/>
    <property type="match status" value="1"/>
</dbReference>
<dbReference type="SUPFAM" id="SSF54211">
    <property type="entry name" value="Ribosomal protein S5 domain 2-like"/>
    <property type="match status" value="1"/>
</dbReference>
<dbReference type="PROSITE" id="PS00106">
    <property type="entry name" value="GALACTOKINASE"/>
    <property type="match status" value="1"/>
</dbReference>
<dbReference type="PROSITE" id="PS00627">
    <property type="entry name" value="GHMP_KINASES_ATP"/>
    <property type="match status" value="1"/>
</dbReference>
<protein>
    <recommendedName>
        <fullName evidence="1">Galactokinase</fullName>
        <ecNumber evidence="1">2.7.1.6</ecNumber>
    </recommendedName>
    <alternativeName>
        <fullName evidence="1">Galactose kinase</fullName>
    </alternativeName>
</protein>
<keyword id="KW-0067">ATP-binding</keyword>
<keyword id="KW-0119">Carbohydrate metabolism</keyword>
<keyword id="KW-0963">Cytoplasm</keyword>
<keyword id="KW-0299">Galactose metabolism</keyword>
<keyword id="KW-0418">Kinase</keyword>
<keyword id="KW-0460">Magnesium</keyword>
<keyword id="KW-0479">Metal-binding</keyword>
<keyword id="KW-0547">Nucleotide-binding</keyword>
<keyword id="KW-1185">Reference proteome</keyword>
<keyword id="KW-0808">Transferase</keyword>
<sequence>MSLKEKTQSLFANAFGYPATHTIQAPGRVNLIGEHTDYNDGFVLPCAIDYQTVISCAPRDDRKVRVMAADYENQLDEFSLDAPIVAHENYQWANYVRGVVKHLQLRNNSFGGVDMVISGNVPQGAGLSSSASLEVAVGTVLQQLYHLPLDGAQIALNGQEAENQFVGCNCGIMDQLISALGKKDHALLIDCRSLGTKAVSMPKGVAVVIINSNFKRTLVGSEYNTRREQCETGARFFQQPALRDVTIEEFNAVAHELDPIVAKRVRHILTENARTVEAASALEQGDLKRMGELMAESHASMRDDFEITVPQIDTLVEIVKAVIGDKGGVRMTGGGFGGCIVALIPEELVPAVQQAVAEQYEAKTGIKETFYVCKPSQGAGQC</sequence>
<organism>
    <name type="scientific">Escherichia coli (strain 55989 / EAEC)</name>
    <dbReference type="NCBI Taxonomy" id="585055"/>
    <lineage>
        <taxon>Bacteria</taxon>
        <taxon>Pseudomonadati</taxon>
        <taxon>Pseudomonadota</taxon>
        <taxon>Gammaproteobacteria</taxon>
        <taxon>Enterobacterales</taxon>
        <taxon>Enterobacteriaceae</taxon>
        <taxon>Escherichia</taxon>
    </lineage>
</organism>
<feature type="chain" id="PRO_1000125378" description="Galactokinase">
    <location>
        <begin position="1"/>
        <end position="382"/>
    </location>
</feature>
<feature type="active site" description="Proton acceptor" evidence="1">
    <location>
        <position position="174"/>
    </location>
</feature>
<feature type="binding site" evidence="1">
    <location>
        <begin position="34"/>
        <end position="37"/>
    </location>
    <ligand>
        <name>substrate</name>
    </ligand>
</feature>
<feature type="binding site" evidence="1">
    <location>
        <begin position="124"/>
        <end position="130"/>
    </location>
    <ligand>
        <name>ATP</name>
        <dbReference type="ChEBI" id="CHEBI:30616"/>
    </ligand>
</feature>
<feature type="binding site" evidence="1">
    <location>
        <position position="130"/>
    </location>
    <ligand>
        <name>Mg(2+)</name>
        <dbReference type="ChEBI" id="CHEBI:18420"/>
    </ligand>
</feature>
<feature type="binding site" evidence="1">
    <location>
        <position position="162"/>
    </location>
    <ligand>
        <name>Mg(2+)</name>
        <dbReference type="ChEBI" id="CHEBI:18420"/>
    </ligand>
</feature>
<feature type="binding site" evidence="1">
    <location>
        <position position="223"/>
    </location>
    <ligand>
        <name>substrate</name>
    </ligand>
</feature>
<feature type="site" description="Transition state stabilizer" evidence="1">
    <location>
        <position position="28"/>
    </location>
</feature>
<gene>
    <name evidence="1" type="primary">galK</name>
    <name type="ordered locus">EC55989_0736</name>
</gene>
<accession>B7LAF8</accession>
<comment type="function">
    <text evidence="1">Catalyzes the transfer of the gamma-phosphate of ATP to D-galactose to form alpha-D-galactose-1-phosphate (Gal-1-P).</text>
</comment>
<comment type="catalytic activity">
    <reaction evidence="1">
        <text>alpha-D-galactose + ATP = alpha-D-galactose 1-phosphate + ADP + H(+)</text>
        <dbReference type="Rhea" id="RHEA:13553"/>
        <dbReference type="ChEBI" id="CHEBI:15378"/>
        <dbReference type="ChEBI" id="CHEBI:28061"/>
        <dbReference type="ChEBI" id="CHEBI:30616"/>
        <dbReference type="ChEBI" id="CHEBI:58336"/>
        <dbReference type="ChEBI" id="CHEBI:456216"/>
        <dbReference type="EC" id="2.7.1.6"/>
    </reaction>
</comment>
<comment type="pathway">
    <text evidence="1">Carbohydrate metabolism; galactose metabolism.</text>
</comment>
<comment type="subcellular location">
    <subcellularLocation>
        <location evidence="1">Cytoplasm</location>
    </subcellularLocation>
</comment>
<comment type="similarity">
    <text evidence="1">Belongs to the GHMP kinase family. GalK subfamily.</text>
</comment>
<name>GAL1_ECO55</name>
<evidence type="ECO:0000255" key="1">
    <source>
        <dbReference type="HAMAP-Rule" id="MF_00246"/>
    </source>
</evidence>